<comment type="function">
    <text evidence="6 14">Plays a role in mitochondrial electron transport and mitochondrial respiration (PubMed:27252383). Through its regulation of the mitochondrial function may play a role in normal postnatal skeletal growth and cartilage homeostasis (PubMed:10471507, PubMed:27252383).</text>
</comment>
<comment type="subcellular location">
    <subcellularLocation>
        <location evidence="14">Secreted</location>
    </subcellularLocation>
    <subcellularLocation>
        <location evidence="14">Mitochondrion</location>
    </subcellularLocation>
    <text evidence="14">Associated with membranes.</text>
</comment>
<comment type="alternative products">
    <event type="alternative splicing"/>
    <isoform>
        <id>O95389-1</id>
        <name>1</name>
        <sequence type="displayed"/>
    </isoform>
    <isoform>
        <id>O95389-2</id>
        <name>2</name>
        <sequence type="described" ref="VSP_037803"/>
    </isoform>
</comment>
<comment type="tissue specificity">
    <text evidence="6 17">Predominant expression in adult kidney and testis and fetal kidney. Weaker expression found in placenta, ovary, prostate and small intestine (PubMed:10471507, PubMed:9843955). Also expressed in skeletally-derived cells such as synoviocytes and articular cartilage chondrocytes (PubMed:10471507).</text>
</comment>
<comment type="disease" evidence="6 7 8 9 10 11 12 13 15 16">
    <disease id="DI-02213">
        <name>Progressive pseudorheumatoid dysplasia</name>
        <acronym>PPRD</acronym>
        <description>An autosomal recessive disorder characterized by stiffness and swelling of joints, motor weakness and joint contractures. Signs and symptoms of the disease develop typically between three and eight years of age. This progressive disease is a primary disorder of articular cartilage with continued cartilage loss and destructive bone changes with aging.</description>
        <dbReference type="MIM" id="208230"/>
    </disease>
    <text>The disease is caused by variants affecting the gene represented in this entry.</text>
</comment>
<comment type="similarity">
    <text evidence="21">Belongs to the CCN family.</text>
</comment>
<comment type="online information" name="Atlas of Genetics and Cytogenetics in Oncology and Haematology">
    <link uri="https://atlasgeneticsoncology.org/gene/469/WISP3"/>
</comment>
<keyword id="KW-0025">Alternative splicing</keyword>
<keyword id="KW-0225">Disease variant</keyword>
<keyword id="KW-1015">Disulfide bond</keyword>
<keyword id="KW-0325">Glycoprotein</keyword>
<keyword id="KW-0339">Growth factor</keyword>
<keyword id="KW-0496">Mitochondrion</keyword>
<keyword id="KW-1267">Proteomics identification</keyword>
<keyword id="KW-1185">Reference proteome</keyword>
<keyword id="KW-0964">Secreted</keyword>
<keyword id="KW-0732">Signal</keyword>
<protein>
    <recommendedName>
        <fullName>Cellular communication network factor 6</fullName>
    </recommendedName>
    <alternativeName>
        <fullName>CCN family member 6</fullName>
    </alternativeName>
    <alternativeName>
        <fullName evidence="20">WNT1-inducible-signaling pathway protein 3</fullName>
        <shortName evidence="20">WISP-3</shortName>
    </alternativeName>
</protein>
<evidence type="ECO:0000250" key="1"/>
<evidence type="ECO:0000255" key="2"/>
<evidence type="ECO:0000255" key="3">
    <source>
        <dbReference type="PROSITE-ProRule" id="PRU00039"/>
    </source>
</evidence>
<evidence type="ECO:0000255" key="4">
    <source>
        <dbReference type="PROSITE-ProRule" id="PRU00210"/>
    </source>
</evidence>
<evidence type="ECO:0000255" key="5">
    <source>
        <dbReference type="PROSITE-ProRule" id="PRU00653"/>
    </source>
</evidence>
<evidence type="ECO:0000269" key="6">
    <source>
    </source>
</evidence>
<evidence type="ECO:0000269" key="7">
    <source>
    </source>
</evidence>
<evidence type="ECO:0000269" key="8">
    <source>
    </source>
</evidence>
<evidence type="ECO:0000269" key="9">
    <source>
    </source>
</evidence>
<evidence type="ECO:0000269" key="10">
    <source>
    </source>
</evidence>
<evidence type="ECO:0000269" key="11">
    <source>
    </source>
</evidence>
<evidence type="ECO:0000269" key="12">
    <source>
    </source>
</evidence>
<evidence type="ECO:0000269" key="13">
    <source>
    </source>
</evidence>
<evidence type="ECO:0000269" key="14">
    <source>
    </source>
</evidence>
<evidence type="ECO:0000269" key="15">
    <source>
    </source>
</evidence>
<evidence type="ECO:0000269" key="16">
    <source>
    </source>
</evidence>
<evidence type="ECO:0000269" key="17">
    <source>
    </source>
</evidence>
<evidence type="ECO:0000303" key="18">
    <source>
    </source>
</evidence>
<evidence type="ECO:0000303" key="19">
    <source>
    </source>
</evidence>
<evidence type="ECO:0000303" key="20">
    <source>
    </source>
</evidence>
<evidence type="ECO:0000305" key="21"/>
<evidence type="ECO:0000312" key="22">
    <source>
        <dbReference type="HGNC" id="HGNC:12771"/>
    </source>
</evidence>
<accession>O95389</accession>
<accession>Q3KR29</accession>
<accession>Q5H8W4</accession>
<accession>Q6UXH6</accession>
<proteinExistence type="evidence at protein level"/>
<dbReference type="EMBL" id="AF100781">
    <property type="protein sequence ID" value="AAC96323.1"/>
    <property type="molecule type" value="mRNA"/>
</dbReference>
<dbReference type="EMBL" id="AY358349">
    <property type="protein sequence ID" value="AAQ88715.1"/>
    <property type="molecule type" value="mRNA"/>
</dbReference>
<dbReference type="EMBL" id="AY358350">
    <property type="protein sequence ID" value="AAQ88716.1"/>
    <property type="molecule type" value="mRNA"/>
</dbReference>
<dbReference type="EMBL" id="Z99289">
    <property type="status" value="NOT_ANNOTATED_CDS"/>
    <property type="molecule type" value="Genomic_DNA"/>
</dbReference>
<dbReference type="EMBL" id="AL512299">
    <property type="status" value="NOT_ANNOTATED_CDS"/>
    <property type="molecule type" value="Genomic_DNA"/>
</dbReference>
<dbReference type="EMBL" id="CH471051">
    <property type="protein sequence ID" value="EAW48273.1"/>
    <property type="molecule type" value="Genomic_DNA"/>
</dbReference>
<dbReference type="EMBL" id="CH471051">
    <property type="protein sequence ID" value="EAW48275.1"/>
    <property type="molecule type" value="Genomic_DNA"/>
</dbReference>
<dbReference type="EMBL" id="BC105941">
    <property type="protein sequence ID" value="AAI05942.1"/>
    <property type="molecule type" value="mRNA"/>
</dbReference>
<dbReference type="CCDS" id="CCDS5098.1">
    <molecule id="O95389-1"/>
</dbReference>
<dbReference type="RefSeq" id="NP_003871.1">
    <molecule id="O95389-1"/>
    <property type="nucleotide sequence ID" value="NM_003880.4"/>
</dbReference>
<dbReference type="RefSeq" id="NP_937882.2">
    <molecule id="O95389-1"/>
    <property type="nucleotide sequence ID" value="NM_198239.2"/>
</dbReference>
<dbReference type="RefSeq" id="XP_011534522.1">
    <molecule id="O95389-1"/>
    <property type="nucleotide sequence ID" value="XM_011536220.1"/>
</dbReference>
<dbReference type="RefSeq" id="XP_054212643.1">
    <molecule id="O95389-1"/>
    <property type="nucleotide sequence ID" value="XM_054356668.1"/>
</dbReference>
<dbReference type="SMR" id="O95389"/>
<dbReference type="BioGRID" id="114365">
    <property type="interactions" value="20"/>
</dbReference>
<dbReference type="FunCoup" id="O95389">
    <property type="interactions" value="31"/>
</dbReference>
<dbReference type="IntAct" id="O95389">
    <property type="interactions" value="15"/>
</dbReference>
<dbReference type="STRING" id="9606.ENSP00000357655"/>
<dbReference type="GlyCosmos" id="O95389">
    <property type="glycosylation" value="2 sites, No reported glycans"/>
</dbReference>
<dbReference type="GlyGen" id="O95389">
    <property type="glycosylation" value="2 sites"/>
</dbReference>
<dbReference type="iPTMnet" id="O95389"/>
<dbReference type="PhosphoSitePlus" id="O95389"/>
<dbReference type="BioMuta" id="WISP3"/>
<dbReference type="jPOST" id="O95389"/>
<dbReference type="MassIVE" id="O95389"/>
<dbReference type="PaxDb" id="9606-ENSP00000357655"/>
<dbReference type="PeptideAtlas" id="O95389"/>
<dbReference type="ProteomicsDB" id="50840">
    <molecule id="O95389-1"/>
</dbReference>
<dbReference type="ProteomicsDB" id="50841">
    <molecule id="O95389-2"/>
</dbReference>
<dbReference type="Antibodypedia" id="32438">
    <property type="antibodies" value="183 antibodies from 25 providers"/>
</dbReference>
<dbReference type="DNASU" id="8838"/>
<dbReference type="Ensembl" id="ENST00000230529.9">
    <molecule id="O95389-1"/>
    <property type="protein sequence ID" value="ENSP00000230529.5"/>
    <property type="gene ID" value="ENSG00000112761.22"/>
</dbReference>
<dbReference type="Ensembl" id="ENST00000368666.7">
    <molecule id="O95389-1"/>
    <property type="protein sequence ID" value="ENSP00000357655.4"/>
    <property type="gene ID" value="ENSG00000112761.22"/>
</dbReference>
<dbReference type="Ensembl" id="ENST00000604763.5">
    <molecule id="O95389-1"/>
    <property type="protein sequence ID" value="ENSP00000473777.1"/>
    <property type="gene ID" value="ENSG00000112761.22"/>
</dbReference>
<dbReference type="GeneID" id="8838"/>
<dbReference type="KEGG" id="hsa:8838"/>
<dbReference type="MANE-Select" id="ENST00000368666.7">
    <property type="protein sequence ID" value="ENSP00000357655.4"/>
    <property type="RefSeq nucleotide sequence ID" value="NM_198239.2"/>
    <property type="RefSeq protein sequence ID" value="NP_937882.2"/>
</dbReference>
<dbReference type="UCSC" id="uc003pvm.4">
    <molecule id="O95389-1"/>
    <property type="organism name" value="human"/>
</dbReference>
<dbReference type="AGR" id="HGNC:12771"/>
<dbReference type="CTD" id="8838"/>
<dbReference type="DisGeNET" id="8838"/>
<dbReference type="GeneCards" id="CCN6"/>
<dbReference type="GeneReviews" id="CCN6"/>
<dbReference type="HGNC" id="HGNC:12771">
    <property type="gene designation" value="CCN6"/>
</dbReference>
<dbReference type="HPA" id="ENSG00000112761">
    <property type="expression patterns" value="Tissue enhanced (brain, epididymis)"/>
</dbReference>
<dbReference type="MalaCards" id="CCN6"/>
<dbReference type="MIM" id="208230">
    <property type="type" value="phenotype"/>
</dbReference>
<dbReference type="MIM" id="603400">
    <property type="type" value="gene"/>
</dbReference>
<dbReference type="neXtProt" id="NX_O95389"/>
<dbReference type="OpenTargets" id="ENSG00000112761"/>
<dbReference type="Orphanet" id="1159">
    <property type="disease" value="Progressive pseudorheumatoid dysplasia"/>
</dbReference>
<dbReference type="PharmGKB" id="PA37374"/>
<dbReference type="VEuPathDB" id="HostDB:ENSG00000112761"/>
<dbReference type="eggNOG" id="ENOG502QW30">
    <property type="taxonomic scope" value="Eukaryota"/>
</dbReference>
<dbReference type="GeneTree" id="ENSGT00940000160119"/>
<dbReference type="HOGENOM" id="CLU_063247_2_0_1"/>
<dbReference type="InParanoid" id="O95389"/>
<dbReference type="OMA" id="ERCNERD"/>
<dbReference type="OrthoDB" id="365605at2759"/>
<dbReference type="PAN-GO" id="O95389">
    <property type="GO annotations" value="6 GO annotations based on evolutionary models"/>
</dbReference>
<dbReference type="PhylomeDB" id="O95389"/>
<dbReference type="TreeFam" id="TF326070"/>
<dbReference type="PathwayCommons" id="O95389"/>
<dbReference type="SignaLink" id="O95389"/>
<dbReference type="BioGRID-ORCS" id="8838">
    <property type="hits" value="9 hits in 1151 CRISPR screens"/>
</dbReference>
<dbReference type="GeneWiki" id="WNT1-inducible-signaling_pathway_protein_3"/>
<dbReference type="GenomeRNAi" id="8838"/>
<dbReference type="Pharos" id="O95389">
    <property type="development level" value="Tbio"/>
</dbReference>
<dbReference type="PRO" id="PR:O95389"/>
<dbReference type="Proteomes" id="UP000005640">
    <property type="component" value="Chromosome 6"/>
</dbReference>
<dbReference type="RNAct" id="O95389">
    <property type="molecule type" value="protein"/>
</dbReference>
<dbReference type="Bgee" id="ENSG00000112761">
    <property type="expression patterns" value="Expressed in tibia and 104 other cell types or tissues"/>
</dbReference>
<dbReference type="ExpressionAtlas" id="O95389">
    <property type="expression patterns" value="baseline and differential"/>
</dbReference>
<dbReference type="GO" id="GO:0031012">
    <property type="term" value="C:extracellular matrix"/>
    <property type="evidence" value="ECO:0000318"/>
    <property type="project" value="GO_Central"/>
</dbReference>
<dbReference type="GO" id="GO:0005615">
    <property type="term" value="C:extracellular space"/>
    <property type="evidence" value="ECO:0000314"/>
    <property type="project" value="UniProtKB"/>
</dbReference>
<dbReference type="GO" id="GO:0005739">
    <property type="term" value="C:mitochondrion"/>
    <property type="evidence" value="ECO:0000314"/>
    <property type="project" value="HPA"/>
</dbReference>
<dbReference type="GO" id="GO:0008083">
    <property type="term" value="F:growth factor activity"/>
    <property type="evidence" value="ECO:0007669"/>
    <property type="project" value="UniProtKB-KW"/>
</dbReference>
<dbReference type="GO" id="GO:0008201">
    <property type="term" value="F:heparin binding"/>
    <property type="evidence" value="ECO:0000318"/>
    <property type="project" value="GO_Central"/>
</dbReference>
<dbReference type="GO" id="GO:0005178">
    <property type="term" value="F:integrin binding"/>
    <property type="evidence" value="ECO:0000318"/>
    <property type="project" value="GO_Central"/>
</dbReference>
<dbReference type="GO" id="GO:0007155">
    <property type="term" value="P:cell adhesion"/>
    <property type="evidence" value="ECO:0000318"/>
    <property type="project" value="GO_Central"/>
</dbReference>
<dbReference type="GO" id="GO:0007267">
    <property type="term" value="P:cell-cell signaling"/>
    <property type="evidence" value="ECO:0000304"/>
    <property type="project" value="ProtInc"/>
</dbReference>
<dbReference type="GO" id="GO:0016525">
    <property type="term" value="P:negative regulation of angiogenesis"/>
    <property type="evidence" value="ECO:0000314"/>
    <property type="project" value="MGI"/>
</dbReference>
<dbReference type="GO" id="GO:0008285">
    <property type="term" value="P:negative regulation of cell population proliferation"/>
    <property type="evidence" value="ECO:0000314"/>
    <property type="project" value="MGI"/>
</dbReference>
<dbReference type="GO" id="GO:0045597">
    <property type="term" value="P:positive regulation of cell differentiation"/>
    <property type="evidence" value="ECO:0000318"/>
    <property type="project" value="GO_Central"/>
</dbReference>
<dbReference type="GO" id="GO:0051881">
    <property type="term" value="P:regulation of mitochondrial membrane potential"/>
    <property type="evidence" value="ECO:0000315"/>
    <property type="project" value="UniProtKB"/>
</dbReference>
<dbReference type="GO" id="GO:1903426">
    <property type="term" value="P:regulation of reactive oxygen species biosynthetic process"/>
    <property type="evidence" value="ECO:0000315"/>
    <property type="project" value="UniProtKB"/>
</dbReference>
<dbReference type="GO" id="GO:0007165">
    <property type="term" value="P:signal transduction"/>
    <property type="evidence" value="ECO:0000318"/>
    <property type="project" value="GO_Central"/>
</dbReference>
<dbReference type="FunFam" id="2.10.70.10:FF:000081">
    <property type="entry name" value="Cellular communication network factor 6"/>
    <property type="match status" value="1"/>
</dbReference>
<dbReference type="FunFam" id="2.20.100.10:FF:000065">
    <property type="entry name" value="Cellular communication network factor 6"/>
    <property type="match status" value="1"/>
</dbReference>
<dbReference type="Gene3D" id="2.10.70.10">
    <property type="entry name" value="Complement Module, domain 1"/>
    <property type="match status" value="1"/>
</dbReference>
<dbReference type="Gene3D" id="2.20.100.10">
    <property type="entry name" value="Thrombospondin type-1 (TSP1) repeat"/>
    <property type="match status" value="1"/>
</dbReference>
<dbReference type="InterPro" id="IPR050941">
    <property type="entry name" value="CCN"/>
</dbReference>
<dbReference type="InterPro" id="IPR006207">
    <property type="entry name" value="Cys_knot_C"/>
</dbReference>
<dbReference type="InterPro" id="IPR006208">
    <property type="entry name" value="Glyco_hormone_CN"/>
</dbReference>
<dbReference type="InterPro" id="IPR009030">
    <property type="entry name" value="Growth_fac_rcpt_cys_sf"/>
</dbReference>
<dbReference type="InterPro" id="IPR000867">
    <property type="entry name" value="IGFBP-like"/>
</dbReference>
<dbReference type="InterPro" id="IPR012395">
    <property type="entry name" value="IGFBP_CNN"/>
</dbReference>
<dbReference type="InterPro" id="IPR017891">
    <property type="entry name" value="Insulin_GF-bd_Cys-rich_CS"/>
</dbReference>
<dbReference type="InterPro" id="IPR043973">
    <property type="entry name" value="TSP1_CCN"/>
</dbReference>
<dbReference type="InterPro" id="IPR000884">
    <property type="entry name" value="TSP1_rpt"/>
</dbReference>
<dbReference type="InterPro" id="IPR036383">
    <property type="entry name" value="TSP1_rpt_sf"/>
</dbReference>
<dbReference type="PANTHER" id="PTHR11348:SF3">
    <property type="entry name" value="CELLULAR COMMUNICATION NETWORK FACTOR 6"/>
    <property type="match status" value="1"/>
</dbReference>
<dbReference type="PANTHER" id="PTHR11348">
    <property type="entry name" value="CONNECTIVE TISSUE GROWTH FACTOR-RELATED"/>
    <property type="match status" value="1"/>
</dbReference>
<dbReference type="Pfam" id="PF00007">
    <property type="entry name" value="Cys_knot"/>
    <property type="match status" value="1"/>
</dbReference>
<dbReference type="Pfam" id="PF00219">
    <property type="entry name" value="IGFBP"/>
    <property type="match status" value="1"/>
</dbReference>
<dbReference type="Pfam" id="PF19035">
    <property type="entry name" value="TSP1_CCN"/>
    <property type="match status" value="1"/>
</dbReference>
<dbReference type="PIRSF" id="PIRSF036495">
    <property type="entry name" value="IGFBP_rP_CNN"/>
    <property type="match status" value="1"/>
</dbReference>
<dbReference type="SMART" id="SM00041">
    <property type="entry name" value="CT"/>
    <property type="match status" value="1"/>
</dbReference>
<dbReference type="SMART" id="SM00121">
    <property type="entry name" value="IB"/>
    <property type="match status" value="1"/>
</dbReference>
<dbReference type="SMART" id="SM00209">
    <property type="entry name" value="TSP1"/>
    <property type="match status" value="1"/>
</dbReference>
<dbReference type="SUPFAM" id="SSF57603">
    <property type="entry name" value="FnI-like domain"/>
    <property type="match status" value="1"/>
</dbReference>
<dbReference type="SUPFAM" id="SSF57184">
    <property type="entry name" value="Growth factor receptor domain"/>
    <property type="match status" value="1"/>
</dbReference>
<dbReference type="SUPFAM" id="SSF82895">
    <property type="entry name" value="TSP-1 type 1 repeat"/>
    <property type="match status" value="1"/>
</dbReference>
<dbReference type="PROSITE" id="PS01225">
    <property type="entry name" value="CTCK_2"/>
    <property type="match status" value="1"/>
</dbReference>
<dbReference type="PROSITE" id="PS00222">
    <property type="entry name" value="IGFBP_N_1"/>
    <property type="match status" value="1"/>
</dbReference>
<dbReference type="PROSITE" id="PS51323">
    <property type="entry name" value="IGFBP_N_2"/>
    <property type="match status" value="1"/>
</dbReference>
<dbReference type="PROSITE" id="PS50092">
    <property type="entry name" value="TSP1"/>
    <property type="match status" value="1"/>
</dbReference>
<sequence length="354" mass="39293">MQGLLFSTLLLAGLAQFCCRVQGTGPLDTTPEGRPGEVSDAPQRKQFCHWPCKCPQQKPRCPPGVSLVRDGCGCCKICAKQPGEICNEADLCDPHKGLYCDYSVDRPRYETGVCAYLVAVGCEFNQVHYHNGQVFQPNPLFSCLCVSGAIGCTPLFIPKLAGSHCSGAKGGKKSDQSNCSLEPLLQQLSTSYKTMPAYRNLPLIWKKKCLVQATKWTPCSRTCGMGISNRVTNENSNCEMRKEKRLCYIQPCDSNILKTIKIPKGKTCQPTFQLSKAEKFVFSGCSSTQSYKPTFCGICLDKRCCIPNKSKMITIQFDCPNEGSFKWKMLWITSCVCQRNCREPGDIFSELKIL</sequence>
<feature type="signal peptide" evidence="2">
    <location>
        <begin position="1"/>
        <end position="23"/>
    </location>
</feature>
<feature type="chain" id="PRO_0000014412" description="Cellular communication network factor 6">
    <location>
        <begin position="24"/>
        <end position="354"/>
    </location>
</feature>
<feature type="domain" description="IGFBP N-terminal" evidence="5">
    <location>
        <begin position="44"/>
        <end position="117"/>
    </location>
</feature>
<feature type="domain" description="TSP type-1" evidence="4">
    <location>
        <begin position="208"/>
        <end position="253"/>
    </location>
</feature>
<feature type="domain" description="CTCK" evidence="3">
    <location>
        <begin position="268"/>
        <end position="342"/>
    </location>
</feature>
<feature type="glycosylation site" description="N-linked (GlcNAc...) asparagine" evidence="2">
    <location>
        <position position="178"/>
    </location>
</feature>
<feature type="glycosylation site" description="N-linked (GlcNAc...) asparagine" evidence="2">
    <location>
        <position position="308"/>
    </location>
</feature>
<feature type="disulfide bond" evidence="5">
    <location>
        <begin position="48"/>
        <end position="72"/>
    </location>
</feature>
<feature type="disulfide bond" evidence="5">
    <location>
        <begin position="52"/>
        <end position="74"/>
    </location>
</feature>
<feature type="disulfide bond" evidence="5">
    <location>
        <begin position="54"/>
        <end position="75"/>
    </location>
</feature>
<feature type="disulfide bond" evidence="5">
    <location>
        <begin position="61"/>
        <end position="78"/>
    </location>
</feature>
<feature type="disulfide bond" evidence="5">
    <location>
        <begin position="86"/>
        <end position="100"/>
    </location>
</feature>
<feature type="disulfide bond" evidence="5">
    <location>
        <begin position="92"/>
        <end position="114"/>
    </location>
</feature>
<feature type="disulfide bond" evidence="1">
    <location>
        <begin position="268"/>
        <end position="305"/>
    </location>
</feature>
<feature type="disulfide bond" evidence="1">
    <location>
        <begin position="285"/>
        <end position="319"/>
    </location>
</feature>
<feature type="disulfide bond" evidence="1">
    <location>
        <begin position="296"/>
        <end position="335"/>
    </location>
</feature>
<feature type="disulfide bond" evidence="1">
    <location>
        <begin position="299"/>
        <end position="337"/>
    </location>
</feature>
<feature type="disulfide bond" evidence="1">
    <location>
        <begin position="304"/>
        <end position="341"/>
    </location>
</feature>
<feature type="splice variant" id="VSP_037803" description="In isoform 2." evidence="18 19">
    <original>M</original>
    <variation>MNKRRLLYPSGWLHGPSDM</variation>
    <location>
        <position position="1"/>
    </location>
</feature>
<feature type="sequence variant" id="VAR_081483" description="In PPRD." evidence="8 11">
    <location>
        <begin position="46"/>
        <end position="354"/>
    </location>
</feature>
<feature type="sequence variant" id="VAR_081484" description="In PPRD." evidence="7 10 13 15 16">
    <location>
        <begin position="52"/>
        <end position="354"/>
    </location>
</feature>
<feature type="sequence variant" id="VAR_016224" description="In dbSNP:rs1230345." evidence="6 7">
    <original>Q</original>
    <variation>H</variation>
    <location>
        <position position="56"/>
    </location>
</feature>
<feature type="sequence variant" id="VAR_049567" description="In dbSNP:rs17073260.">
    <original>R</original>
    <variation>C</variation>
    <location>
        <position position="60"/>
    </location>
</feature>
<feature type="sequence variant" id="VAR_016225" description="In PPRD; dbSNP:rs121908902." evidence="6 7">
    <original>C</original>
    <variation>R</variation>
    <location>
        <position position="78"/>
    </location>
</feature>
<feature type="sequence variant" id="VAR_081485" description="In PPRD." evidence="10 13 15">
    <original>C</original>
    <variation>Y</variation>
    <location>
        <position position="78"/>
    </location>
</feature>
<feature type="sequence variant" id="VAR_081486" description="In dbSNP:rs147337485." evidence="7 10">
    <original>G</original>
    <variation>E</variation>
    <location>
        <position position="83"/>
    </location>
</feature>
<feature type="sequence variant" id="VAR_081652" description="In PPRD; uncertain significance." evidence="13">
    <original>Y</original>
    <variation>F</variation>
    <location>
        <position position="99"/>
    </location>
</feature>
<feature type="sequence variant" id="VAR_081653" description="In PPRD; uncertain significance." evidence="13">
    <original>C</original>
    <variation>S</variation>
    <location>
        <position position="100"/>
    </location>
</feature>
<feature type="sequence variant" id="VAR_081487" description="In PPRD." evidence="10">
    <original>C</original>
    <variation>R</variation>
    <location>
        <position position="114"/>
    </location>
</feature>
<feature type="sequence variant" id="VAR_081488" description="In PPRD." evidence="9 11">
    <original>C</original>
    <variation>W</variation>
    <location>
        <position position="114"/>
    </location>
</feature>
<feature type="sequence variant" id="VAR_081654" description="In PPRD." evidence="8">
    <original>C</original>
    <variation>Y</variation>
    <location>
        <position position="114"/>
    </location>
</feature>
<feature type="sequence variant" id="VAR_081489" description="In PPRD." evidence="10 13 15">
    <location>
        <begin position="116"/>
        <end position="354"/>
    </location>
</feature>
<feature type="sequence variant" id="VAR_081490" description="In PPRD; uncertain significance." evidence="10 13">
    <original>C</original>
    <variation>R</variation>
    <location>
        <position position="145"/>
    </location>
</feature>
<feature type="sequence variant" id="VAR_081655" description="In PPRD; uncertain significance; dbSNP:rs121908899." evidence="6">
    <original>C</original>
    <variation>Y</variation>
    <location>
        <position position="145"/>
    </location>
</feature>
<feature type="sequence variant" id="VAR_081656" description="In PPRD." evidence="13">
    <location>
        <begin position="177"/>
        <end position="354"/>
    </location>
</feature>
<feature type="sequence variant" id="VAR_081491" description="In PPRD; dbSNP:rs782813346." evidence="11 12">
    <original>C</original>
    <variation>G</variation>
    <location>
        <position position="223"/>
    </location>
</feature>
<feature type="sequence variant" id="VAR_081657" description="In PPRD." evidence="13 15">
    <original>G</original>
    <variation>V</variation>
    <location>
        <position position="226"/>
    </location>
</feature>
<feature type="sequence variant" id="VAR_081492" description="In PPRD; uncertain significance." evidence="10">
    <original>S</original>
    <variation>P</variation>
    <location>
        <position position="228"/>
    </location>
</feature>
<feature type="sequence variant" id="VAR_081658" description="In PPRD." evidence="12">
    <location>
        <begin position="252"/>
        <end position="354"/>
    </location>
</feature>
<feature type="sequence variant" id="VAR_081493" description="In PPRD; uncertain significance." evidence="10">
    <original>C</original>
    <variation>G</variation>
    <location>
        <position position="268"/>
    </location>
</feature>
<feature type="sequence variant" id="VAR_081494" description="In PPRD." evidence="11">
    <location>
        <begin position="286"/>
        <end position="354"/>
    </location>
</feature>
<feature type="sequence variant" id="VAR_081659" description="In PPRD; dbSNP:rs121908903." evidence="9">
    <original>S</original>
    <variation>P</variation>
    <location>
        <position position="334"/>
    </location>
</feature>
<feature type="sequence variant" id="VAR_081495" description="In PPRD." evidence="10 13 15">
    <original>C</original>
    <variation>Y</variation>
    <location>
        <position position="337"/>
    </location>
</feature>
<feature type="sequence conflict" description="In Ref. 2; AAQ88715." evidence="21" ref="2">
    <original>N</original>
    <variation>D</variation>
    <location>
        <position position="200"/>
    </location>
</feature>
<organism>
    <name type="scientific">Homo sapiens</name>
    <name type="common">Human</name>
    <dbReference type="NCBI Taxonomy" id="9606"/>
    <lineage>
        <taxon>Eukaryota</taxon>
        <taxon>Metazoa</taxon>
        <taxon>Chordata</taxon>
        <taxon>Craniata</taxon>
        <taxon>Vertebrata</taxon>
        <taxon>Euteleostomi</taxon>
        <taxon>Mammalia</taxon>
        <taxon>Eutheria</taxon>
        <taxon>Euarchontoglires</taxon>
        <taxon>Primates</taxon>
        <taxon>Haplorrhini</taxon>
        <taxon>Catarrhini</taxon>
        <taxon>Hominidae</taxon>
        <taxon>Homo</taxon>
    </lineage>
</organism>
<name>CCN6_HUMAN</name>
<reference key="1">
    <citation type="journal article" date="1998" name="Proc. Natl. Acad. Sci. U.S.A.">
        <title>WISP genes are members of the connective tissue growth factor family that are up-regulated in wnt-1-transformed cells and aberrantly expressed in human colon tumors.</title>
        <authorList>
            <person name="Pennica D."/>
            <person name="Swanson T.A."/>
            <person name="Welsh J.W."/>
            <person name="Roy M.A."/>
            <person name="Lawrence D.A."/>
            <person name="Lee J."/>
            <person name="Brush J."/>
            <person name="Taneyhill L.A."/>
            <person name="Deuel B."/>
            <person name="Lew M."/>
            <person name="Watanabe C."/>
            <person name="Cohen R.L."/>
            <person name="Melham M.F."/>
            <person name="Finley G.G."/>
            <person name="Quirke P."/>
            <person name="Goddard A.D."/>
            <person name="Hillan K.J."/>
            <person name="Gurney A.L."/>
            <person name="Botstein D."/>
            <person name="Levine A.J."/>
        </authorList>
    </citation>
    <scope>NUCLEOTIDE SEQUENCE [MRNA] (ISOFORM 1)</scope>
    <scope>TISSUE SPECIFICITY</scope>
    <source>
        <tissue>Bone marrow</tissue>
        <tissue>Fetal kidney</tissue>
    </source>
</reference>
<reference key="2">
    <citation type="journal article" date="2003" name="Genome Res.">
        <title>The secreted protein discovery initiative (SPDI), a large-scale effort to identify novel human secreted and transmembrane proteins: a bioinformatics assessment.</title>
        <authorList>
            <person name="Clark H.F."/>
            <person name="Gurney A.L."/>
            <person name="Abaya E."/>
            <person name="Baker K."/>
            <person name="Baldwin D.T."/>
            <person name="Brush J."/>
            <person name="Chen J."/>
            <person name="Chow B."/>
            <person name="Chui C."/>
            <person name="Crowley C."/>
            <person name="Currell B."/>
            <person name="Deuel B."/>
            <person name="Dowd P."/>
            <person name="Eaton D."/>
            <person name="Foster J.S."/>
            <person name="Grimaldi C."/>
            <person name="Gu Q."/>
            <person name="Hass P.E."/>
            <person name="Heldens S."/>
            <person name="Huang A."/>
            <person name="Kim H.S."/>
            <person name="Klimowski L."/>
            <person name="Jin Y."/>
            <person name="Johnson S."/>
            <person name="Lee J."/>
            <person name="Lewis L."/>
            <person name="Liao D."/>
            <person name="Mark M.R."/>
            <person name="Robbie E."/>
            <person name="Sanchez C."/>
            <person name="Schoenfeld J."/>
            <person name="Seshagiri S."/>
            <person name="Simmons L."/>
            <person name="Singh J."/>
            <person name="Smith V."/>
            <person name="Stinson J."/>
            <person name="Vagts A."/>
            <person name="Vandlen R.L."/>
            <person name="Watanabe C."/>
            <person name="Wieand D."/>
            <person name="Woods K."/>
            <person name="Xie M.-H."/>
            <person name="Yansura D.G."/>
            <person name="Yi S."/>
            <person name="Yu G."/>
            <person name="Yuan J."/>
            <person name="Zhang M."/>
            <person name="Zhang Z."/>
            <person name="Goddard A.D."/>
            <person name="Wood W.I."/>
            <person name="Godowski P.J."/>
            <person name="Gray A.M."/>
        </authorList>
    </citation>
    <scope>NUCLEOTIDE SEQUENCE [LARGE SCALE MRNA] (ISOFORM 2)</scope>
</reference>
<reference key="3">
    <citation type="journal article" date="2003" name="Nature">
        <title>The DNA sequence and analysis of human chromosome 6.</title>
        <authorList>
            <person name="Mungall A.J."/>
            <person name="Palmer S.A."/>
            <person name="Sims S.K."/>
            <person name="Edwards C.A."/>
            <person name="Ashurst J.L."/>
            <person name="Wilming L."/>
            <person name="Jones M.C."/>
            <person name="Horton R."/>
            <person name="Hunt S.E."/>
            <person name="Scott C.E."/>
            <person name="Gilbert J.G.R."/>
            <person name="Clamp M.E."/>
            <person name="Bethel G."/>
            <person name="Milne S."/>
            <person name="Ainscough R."/>
            <person name="Almeida J.P."/>
            <person name="Ambrose K.D."/>
            <person name="Andrews T.D."/>
            <person name="Ashwell R.I.S."/>
            <person name="Babbage A.K."/>
            <person name="Bagguley C.L."/>
            <person name="Bailey J."/>
            <person name="Banerjee R."/>
            <person name="Barker D.J."/>
            <person name="Barlow K.F."/>
            <person name="Bates K."/>
            <person name="Beare D.M."/>
            <person name="Beasley H."/>
            <person name="Beasley O."/>
            <person name="Bird C.P."/>
            <person name="Blakey S.E."/>
            <person name="Bray-Allen S."/>
            <person name="Brook J."/>
            <person name="Brown A.J."/>
            <person name="Brown J.Y."/>
            <person name="Burford D.C."/>
            <person name="Burrill W."/>
            <person name="Burton J."/>
            <person name="Carder C."/>
            <person name="Carter N.P."/>
            <person name="Chapman J.C."/>
            <person name="Clark S.Y."/>
            <person name="Clark G."/>
            <person name="Clee C.M."/>
            <person name="Clegg S."/>
            <person name="Cobley V."/>
            <person name="Collier R.E."/>
            <person name="Collins J.E."/>
            <person name="Colman L.K."/>
            <person name="Corby N.R."/>
            <person name="Coville G.J."/>
            <person name="Culley K.M."/>
            <person name="Dhami P."/>
            <person name="Davies J."/>
            <person name="Dunn M."/>
            <person name="Earthrowl M.E."/>
            <person name="Ellington A.E."/>
            <person name="Evans K.A."/>
            <person name="Faulkner L."/>
            <person name="Francis M.D."/>
            <person name="Frankish A."/>
            <person name="Frankland J."/>
            <person name="French L."/>
            <person name="Garner P."/>
            <person name="Garnett J."/>
            <person name="Ghori M.J."/>
            <person name="Gilby L.M."/>
            <person name="Gillson C.J."/>
            <person name="Glithero R.J."/>
            <person name="Grafham D.V."/>
            <person name="Grant M."/>
            <person name="Gribble S."/>
            <person name="Griffiths C."/>
            <person name="Griffiths M.N.D."/>
            <person name="Hall R."/>
            <person name="Halls K.S."/>
            <person name="Hammond S."/>
            <person name="Harley J.L."/>
            <person name="Hart E.A."/>
            <person name="Heath P.D."/>
            <person name="Heathcott R."/>
            <person name="Holmes S.J."/>
            <person name="Howden P.J."/>
            <person name="Howe K.L."/>
            <person name="Howell G.R."/>
            <person name="Huckle E."/>
            <person name="Humphray S.J."/>
            <person name="Humphries M.D."/>
            <person name="Hunt A.R."/>
            <person name="Johnson C.M."/>
            <person name="Joy A.A."/>
            <person name="Kay M."/>
            <person name="Keenan S.J."/>
            <person name="Kimberley A.M."/>
            <person name="King A."/>
            <person name="Laird G.K."/>
            <person name="Langford C."/>
            <person name="Lawlor S."/>
            <person name="Leongamornlert D.A."/>
            <person name="Leversha M."/>
            <person name="Lloyd C.R."/>
            <person name="Lloyd D.M."/>
            <person name="Loveland J.E."/>
            <person name="Lovell J."/>
            <person name="Martin S."/>
            <person name="Mashreghi-Mohammadi M."/>
            <person name="Maslen G.L."/>
            <person name="Matthews L."/>
            <person name="McCann O.T."/>
            <person name="McLaren S.J."/>
            <person name="McLay K."/>
            <person name="McMurray A."/>
            <person name="Moore M.J.F."/>
            <person name="Mullikin J.C."/>
            <person name="Niblett D."/>
            <person name="Nickerson T."/>
            <person name="Novik K.L."/>
            <person name="Oliver K."/>
            <person name="Overton-Larty E.K."/>
            <person name="Parker A."/>
            <person name="Patel R."/>
            <person name="Pearce A.V."/>
            <person name="Peck A.I."/>
            <person name="Phillimore B.J.C.T."/>
            <person name="Phillips S."/>
            <person name="Plumb R.W."/>
            <person name="Porter K.M."/>
            <person name="Ramsey Y."/>
            <person name="Ranby S.A."/>
            <person name="Rice C.M."/>
            <person name="Ross M.T."/>
            <person name="Searle S.M."/>
            <person name="Sehra H.K."/>
            <person name="Sheridan E."/>
            <person name="Skuce C.D."/>
            <person name="Smith S."/>
            <person name="Smith M."/>
            <person name="Spraggon L."/>
            <person name="Squares S.L."/>
            <person name="Steward C.A."/>
            <person name="Sycamore N."/>
            <person name="Tamlyn-Hall G."/>
            <person name="Tester J."/>
            <person name="Theaker A.J."/>
            <person name="Thomas D.W."/>
            <person name="Thorpe A."/>
            <person name="Tracey A."/>
            <person name="Tromans A."/>
            <person name="Tubby B."/>
            <person name="Wall M."/>
            <person name="Wallis J.M."/>
            <person name="West A.P."/>
            <person name="White S.S."/>
            <person name="Whitehead S.L."/>
            <person name="Whittaker H."/>
            <person name="Wild A."/>
            <person name="Willey D.J."/>
            <person name="Wilmer T.E."/>
            <person name="Wood J.M."/>
            <person name="Wray P.W."/>
            <person name="Wyatt J.C."/>
            <person name="Young L."/>
            <person name="Younger R.M."/>
            <person name="Bentley D.R."/>
            <person name="Coulson A."/>
            <person name="Durbin R.M."/>
            <person name="Hubbard T."/>
            <person name="Sulston J.E."/>
            <person name="Dunham I."/>
            <person name="Rogers J."/>
            <person name="Beck S."/>
        </authorList>
    </citation>
    <scope>NUCLEOTIDE SEQUENCE [LARGE SCALE GENOMIC DNA]</scope>
</reference>
<reference key="4">
    <citation type="submission" date="2005-09" db="EMBL/GenBank/DDBJ databases">
        <authorList>
            <person name="Mural R.J."/>
            <person name="Istrail S."/>
            <person name="Sutton G.G."/>
            <person name="Florea L."/>
            <person name="Halpern A.L."/>
            <person name="Mobarry C.M."/>
            <person name="Lippert R."/>
            <person name="Walenz B."/>
            <person name="Shatkay H."/>
            <person name="Dew I."/>
            <person name="Miller J.R."/>
            <person name="Flanigan M.J."/>
            <person name="Edwards N.J."/>
            <person name="Bolanos R."/>
            <person name="Fasulo D."/>
            <person name="Halldorsson B.V."/>
            <person name="Hannenhalli S."/>
            <person name="Turner R."/>
            <person name="Yooseph S."/>
            <person name="Lu F."/>
            <person name="Nusskern D.R."/>
            <person name="Shue B.C."/>
            <person name="Zheng X.H."/>
            <person name="Zhong F."/>
            <person name="Delcher A.L."/>
            <person name="Huson D.H."/>
            <person name="Kravitz S.A."/>
            <person name="Mouchard L."/>
            <person name="Reinert K."/>
            <person name="Remington K.A."/>
            <person name="Clark A.G."/>
            <person name="Waterman M.S."/>
            <person name="Eichler E.E."/>
            <person name="Adams M.D."/>
            <person name="Hunkapiller M.W."/>
            <person name="Myers E.W."/>
            <person name="Venter J.C."/>
        </authorList>
    </citation>
    <scope>NUCLEOTIDE SEQUENCE [LARGE SCALE GENOMIC DNA]</scope>
</reference>
<reference key="5">
    <citation type="journal article" date="2004" name="Genome Res.">
        <title>The status, quality, and expansion of the NIH full-length cDNA project: the Mammalian Gene Collection (MGC).</title>
        <authorList>
            <consortium name="The MGC Project Team"/>
        </authorList>
    </citation>
    <scope>NUCLEOTIDE SEQUENCE [LARGE SCALE MRNA] (ISOFORM 2)</scope>
</reference>
<reference key="6">
    <citation type="journal article" date="2016" name="J. Cell Sci.">
        <title>CCN6 regulates mitochondrial function.</title>
        <authorList>
            <person name="Patra M."/>
            <person name="Mahata S.K."/>
            <person name="Padhan D.K."/>
            <person name="Sen M."/>
        </authorList>
    </citation>
    <scope>SUBCELLULAR LOCATION</scope>
    <scope>FUNCTION</scope>
</reference>
<reference key="7">
    <citation type="journal article" date="1999" name="Nat. Genet.">
        <title>Mutations in the CCN gene family member WISP3 cause progressive pseudorheumatoid dysplasia.</title>
        <authorList>
            <person name="Hurvitz J.R."/>
            <person name="Suwairi W.M."/>
            <person name="Van Hul W."/>
            <person name="El-Shanti H."/>
            <person name="Superti-Furga A."/>
            <person name="Roudier J."/>
            <person name="Holderbaum D."/>
            <person name="Pauli R.M."/>
            <person name="Herd J.K."/>
            <person name="Van Hul E.V."/>
            <person name="Rezai-Delui H."/>
            <person name="Legius E."/>
            <person name="Le Merrer M."/>
            <person name="Al-Alami J."/>
            <person name="Bahabri S.A."/>
            <person name="Warman M.L."/>
        </authorList>
    </citation>
    <scope>INVOLVEMENT IN PPRD</scope>
    <scope>VARIANTS PPRD ARG-78 AND TYR-145</scope>
    <scope>VARIANT HIS-56</scope>
    <scope>TISSUE SPECIFICITY</scope>
    <scope>FUNCTION</scope>
</reference>
<reference key="8">
    <citation type="journal article" date="2005" name="Am. J. Med. Genet. A">
        <title>Molecular study of WISP3 in nine families originating from the Middle-East and presenting with progressive pseudorheumatoid dysplasia: identification of two novel mutations, and description of a founder effect.</title>
        <authorList>
            <person name="Delague V."/>
            <person name="Chouery E."/>
            <person name="Corbani S."/>
            <person name="Ghanem I."/>
            <person name="Aamar S."/>
            <person name="Fischer J."/>
            <person name="Levy-Lahad E."/>
            <person name="Urtizberea J.A."/>
            <person name="Megarbane A."/>
        </authorList>
    </citation>
    <scope>VARIANTS PPRD 52-CYS--LEU-354 DEL AND ARG-78</scope>
    <scope>VARIANTS HIS-56 AND GLU-83</scope>
</reference>
<reference key="9">
    <citation type="journal article" date="2009" name="Bone">
        <title>Identification of novel mutations in WISP3 gene in two unrelated Chinese families with progressive pseudorheumatoid dysplasia.</title>
        <authorList>
            <person name="Yue H."/>
            <person name="Zhang Z.L."/>
            <person name="He J.W."/>
        </authorList>
    </citation>
    <scope>VARIANTS PPRD 46-GLN--LEU-354 DEL AND TYR-114</scope>
</reference>
<reference key="10">
    <citation type="journal article" date="2012" name="Am. J. Med. Genet. A">
        <title>Analysis of the WISP3 gene in Indian families with progressive pseudorheumatoid dysplasia.</title>
        <authorList>
            <person name="Dalal A."/>
            <person name="Bhavani G.S."/>
            <person name="Togarrati P.P."/>
            <person name="Bierhals T."/>
            <person name="Nandineni M.R."/>
            <person name="Danda S."/>
            <person name="Danda D."/>
            <person name="Shah H."/>
            <person name="Vijayan S."/>
            <person name="Gowrishankar K."/>
            <person name="Phadke S.R."/>
            <person name="Bidchol A.M."/>
            <person name="Rao A.P."/>
            <person name="Nampoothiri S."/>
            <person name="Kutsche K."/>
            <person name="Girisha K.M."/>
        </authorList>
    </citation>
    <scope>VARIANTS PPRD 52-CYS--LEU-354 DEL; TYR-78; ARG-114; 116-TYR--LEU-354 DEL; ARG-145; PRO-228; GLY-268 AND TYR-337</scope>
    <scope>VARIANT GLU-83</scope>
</reference>
<reference key="11">
    <citation type="journal article" date="2012" name="PLoS ONE">
        <title>Novel and recurrent mutations of WISP3 in two Chinese families with progressive pseudorheumatoid dysplasia.</title>
        <authorList>
            <person name="Sun J."/>
            <person name="Xia W."/>
            <person name="He S."/>
            <person name="Zhao Z."/>
            <person name="Nie M."/>
            <person name="Li M."/>
            <person name="Jiang Y."/>
            <person name="Xing X."/>
            <person name="Wang O."/>
            <person name="Meng X."/>
            <person name="Zhou X."/>
        </authorList>
    </citation>
    <scope>VARIANTS PPRD TRP-114 AND PRO-334</scope>
</reference>
<reference key="12">
    <citation type="journal article" date="2015" name="Am. J. Med. Genet. A">
        <title>Novel and recurrent mutations in WISP3 and an atypical phenotype.</title>
        <authorList>
            <person name="Bhavani G.S."/>
            <person name="Shah H."/>
            <person name="Dalal A.B."/>
            <person name="Shukla A."/>
            <person name="Danda S."/>
            <person name="Aggarwal S."/>
            <person name="Phadke S.R."/>
            <person name="Gupta N."/>
            <person name="Kabra M."/>
            <person name="Gowrishankar K."/>
            <person name="Gupta A."/>
            <person name="Bhat M."/>
            <person name="Puri R.D."/>
            <person name="Bijarnia-Mahay S."/>
            <person name="Nampoothiri S."/>
            <person name="Mohanasundaram K.M."/>
            <person name="Rajeswari S."/>
            <person name="Kulkarni A.M."/>
            <person name="Kulkarni M.L."/>
            <person name="Ranganath P."/>
            <person name="Ramadevi A.R."/>
            <person name="Hariharan S.V."/>
            <person name="Girisha K.M."/>
        </authorList>
    </citation>
    <scope>VARIANTS PPRD 52-CYS--LEU-354 DEL; TYR-78; PHE-99; SER-100; 116-TYR--LEU-354 DEL; ARG-145; 177-SER--LEU-354 DEL; VAL-226 AND TYR-337</scope>
</reference>
<reference key="13">
    <citation type="journal article" date="2015" name="Gene">
        <title>A novel compound WISP3 mutation in a Chinese family with progressive pseudorheumatoid dysplasia.</title>
        <authorList>
            <person name="Luo H."/>
            <person name="Shi C."/>
            <person name="Mao C."/>
            <person name="Jiang C."/>
            <person name="Bao D."/>
            <person name="Guo J."/>
            <person name="Du P."/>
            <person name="Wang Y."/>
            <person name="Liu Y."/>
            <person name="Liu X."/>
            <person name="Song B."/>
            <person name="Xu Y."/>
        </authorList>
    </citation>
    <scope>VARIANTS PPRD GLY-223 AND 252-CYS--LEU-354 DEL</scope>
</reference>
<reference key="14">
    <citation type="journal article" date="2015" name="Mol. Med. Report.">
        <title>Identification of a mutation in the WISP3 gene in three unrelated families with progressive pseudorheumatoid dysplasia.</title>
        <authorList>
            <person name="Yu Y."/>
            <person name="Hu M."/>
            <person name="Xing X."/>
            <person name="Li F."/>
            <person name="Song Y."/>
            <person name="Luo Y."/>
            <person name="Ma H."/>
        </authorList>
    </citation>
    <scope>VARIANTS PPRD 46-GLN--LEU-354 DEL; TRP-114; GLY-223 AND 286-SER--LEU-354 DEL</scope>
</reference>
<reference key="15">
    <citation type="journal article" date="2016" name="Bone Joint Res.">
        <title>WISP3 mutational analysis in Indian patients diagnosed with progressive pseudorheumatoid dysplasia and report of a novel mutation at p.Y198.</title>
        <authorList>
            <person name="Madhuri V."/>
            <person name="Santhanam M."/>
            <person name="Rajagopal K."/>
            <person name="Sugumar L.K."/>
            <person name="Balaji V."/>
        </authorList>
    </citation>
    <scope>VARIANTS PPRD 52-CYS--LEU-354 DEL; TYR-78; 116-TYR--LEU-354 DEL; VAL-226 AND TYR-337</scope>
</reference>
<reference key="16">
    <citation type="journal article" date="2018" name="Cold Spring Harb. Mol. Case Stud.">
        <title>WISP3 mutation associated with pseudorheumatoid dysplasia.</title>
        <authorList>
            <person name="Sailani M.R."/>
            <person name="Chappell J."/>
            <person name="Jingga I."/>
            <person name="Narasimha A."/>
            <person name="Zia A."/>
            <person name="Lynch J.L."/>
            <person name="Mazrouei S."/>
            <person name="Bernstein J.A."/>
            <person name="Aryani O."/>
            <person name="Snyder M.P."/>
        </authorList>
    </citation>
    <scope>VARIANT PPRD 52-CYS--LEU-354 DEL</scope>
</reference>
<gene>
    <name evidence="22" type="primary">CCN6</name>
    <name evidence="22" type="synonym">WISP3</name>
    <name type="ORF">UNQ462/PRO790/PRO956</name>
</gene>